<reference key="1">
    <citation type="journal article" date="2007" name="PLoS ONE">
        <title>Paradoxical DNA repair and peroxide resistance gene conservation in Bacillus pumilus SAFR-032.</title>
        <authorList>
            <person name="Gioia J."/>
            <person name="Yerrapragada S."/>
            <person name="Qin X."/>
            <person name="Jiang H."/>
            <person name="Igboeli O.C."/>
            <person name="Muzny D."/>
            <person name="Dugan-Rocha S."/>
            <person name="Ding Y."/>
            <person name="Hawes A."/>
            <person name="Liu W."/>
            <person name="Perez L."/>
            <person name="Kovar C."/>
            <person name="Dinh H."/>
            <person name="Lee S."/>
            <person name="Nazareth L."/>
            <person name="Blyth P."/>
            <person name="Holder M."/>
            <person name="Buhay C."/>
            <person name="Tirumalai M.R."/>
            <person name="Liu Y."/>
            <person name="Dasgupta I."/>
            <person name="Bokhetache L."/>
            <person name="Fujita M."/>
            <person name="Karouia F."/>
            <person name="Eswara Moorthy P."/>
            <person name="Siefert J."/>
            <person name="Uzman A."/>
            <person name="Buzumbo P."/>
            <person name="Verma A."/>
            <person name="Zwiya H."/>
            <person name="McWilliams B.D."/>
            <person name="Olowu A."/>
            <person name="Clinkenbeard K.D."/>
            <person name="Newcombe D."/>
            <person name="Golebiewski L."/>
            <person name="Petrosino J.F."/>
            <person name="Nicholson W.L."/>
            <person name="Fox G.E."/>
            <person name="Venkateswaran K."/>
            <person name="Highlander S.K."/>
            <person name="Weinstock G.M."/>
        </authorList>
    </citation>
    <scope>NUCLEOTIDE SEQUENCE [LARGE SCALE GENOMIC DNA]</scope>
    <source>
        <strain>SAFR-032</strain>
    </source>
</reference>
<feature type="chain" id="PRO_1000061447" description="Serine-protein kinase RsbW">
    <location>
        <begin position="1"/>
        <end position="162"/>
    </location>
</feature>
<comment type="function">
    <text evidence="1">Negative regulator of sigma-B activity. Phosphorylates and inactivates its specific antagonist protein, RsbV. Upon phosphorylation of RsbV, RsbW is released and binds to sigma-B, thereby blocking its ability to form an RNA polymerase holoenzyme (E-sigma-B).</text>
</comment>
<comment type="catalytic activity">
    <reaction evidence="1">
        <text>L-seryl-[protein] + ATP = O-phospho-L-seryl-[protein] + ADP + H(+)</text>
        <dbReference type="Rhea" id="RHEA:17989"/>
        <dbReference type="Rhea" id="RHEA-COMP:9863"/>
        <dbReference type="Rhea" id="RHEA-COMP:11604"/>
        <dbReference type="ChEBI" id="CHEBI:15378"/>
        <dbReference type="ChEBI" id="CHEBI:29999"/>
        <dbReference type="ChEBI" id="CHEBI:30616"/>
        <dbReference type="ChEBI" id="CHEBI:83421"/>
        <dbReference type="ChEBI" id="CHEBI:456216"/>
        <dbReference type="EC" id="2.7.11.1"/>
    </reaction>
</comment>
<comment type="catalytic activity">
    <reaction evidence="1">
        <text>L-threonyl-[protein] + ATP = O-phospho-L-threonyl-[protein] + ADP + H(+)</text>
        <dbReference type="Rhea" id="RHEA:46608"/>
        <dbReference type="Rhea" id="RHEA-COMP:11060"/>
        <dbReference type="Rhea" id="RHEA-COMP:11605"/>
        <dbReference type="ChEBI" id="CHEBI:15378"/>
        <dbReference type="ChEBI" id="CHEBI:30013"/>
        <dbReference type="ChEBI" id="CHEBI:30616"/>
        <dbReference type="ChEBI" id="CHEBI:61977"/>
        <dbReference type="ChEBI" id="CHEBI:456216"/>
        <dbReference type="EC" id="2.7.11.1"/>
    </reaction>
</comment>
<comment type="similarity">
    <text evidence="1">Belongs to the anti-sigma-factor family.</text>
</comment>
<gene>
    <name evidence="1" type="primary">rsbW</name>
    <name type="ordered locus">BPUM_0445</name>
</gene>
<evidence type="ECO:0000255" key="1">
    <source>
        <dbReference type="HAMAP-Rule" id="MF_00638"/>
    </source>
</evidence>
<organism>
    <name type="scientific">Bacillus pumilus (strain SAFR-032)</name>
    <dbReference type="NCBI Taxonomy" id="315750"/>
    <lineage>
        <taxon>Bacteria</taxon>
        <taxon>Bacillati</taxon>
        <taxon>Bacillota</taxon>
        <taxon>Bacilli</taxon>
        <taxon>Bacillales</taxon>
        <taxon>Bacillaceae</taxon>
        <taxon>Bacillus</taxon>
    </lineage>
</organism>
<proteinExistence type="inferred from homology"/>
<dbReference type="EC" id="2.7.11.1" evidence="1"/>
<dbReference type="EMBL" id="CP000813">
    <property type="protein sequence ID" value="ABV61140.1"/>
    <property type="molecule type" value="Genomic_DNA"/>
</dbReference>
<dbReference type="RefSeq" id="WP_012008999.1">
    <property type="nucleotide sequence ID" value="NZ_VEIS01000004.1"/>
</dbReference>
<dbReference type="SMR" id="A8FA73"/>
<dbReference type="STRING" id="315750.BPUM_0445"/>
<dbReference type="GeneID" id="5619698"/>
<dbReference type="KEGG" id="bpu:BPUM_0445"/>
<dbReference type="eggNOG" id="COG2172">
    <property type="taxonomic scope" value="Bacteria"/>
</dbReference>
<dbReference type="HOGENOM" id="CLU_090336_11_1_9"/>
<dbReference type="OrthoDB" id="9798941at2"/>
<dbReference type="Proteomes" id="UP000001355">
    <property type="component" value="Chromosome"/>
</dbReference>
<dbReference type="GO" id="GO:0005524">
    <property type="term" value="F:ATP binding"/>
    <property type="evidence" value="ECO:0007669"/>
    <property type="project" value="UniProtKB-KW"/>
</dbReference>
<dbReference type="GO" id="GO:0106310">
    <property type="term" value="F:protein serine kinase activity"/>
    <property type="evidence" value="ECO:0007669"/>
    <property type="project" value="RHEA"/>
</dbReference>
<dbReference type="GO" id="GO:0004674">
    <property type="term" value="F:protein serine/threonine kinase activity"/>
    <property type="evidence" value="ECO:0007669"/>
    <property type="project" value="UniProtKB-KW"/>
</dbReference>
<dbReference type="GO" id="GO:0016989">
    <property type="term" value="F:sigma factor antagonist activity"/>
    <property type="evidence" value="ECO:0007669"/>
    <property type="project" value="InterPro"/>
</dbReference>
<dbReference type="CDD" id="cd16936">
    <property type="entry name" value="HATPase_RsbW-like"/>
    <property type="match status" value="1"/>
</dbReference>
<dbReference type="Gene3D" id="3.30.565.10">
    <property type="entry name" value="Histidine kinase-like ATPase, C-terminal domain"/>
    <property type="match status" value="1"/>
</dbReference>
<dbReference type="HAMAP" id="MF_00638">
    <property type="entry name" value="Anti_sigma_B"/>
    <property type="match status" value="1"/>
</dbReference>
<dbReference type="InterPro" id="IPR050267">
    <property type="entry name" value="Anti-sigma-factor_SerPK"/>
</dbReference>
<dbReference type="InterPro" id="IPR036890">
    <property type="entry name" value="HATPase_C_sf"/>
</dbReference>
<dbReference type="InterPro" id="IPR010193">
    <property type="entry name" value="RsbW"/>
</dbReference>
<dbReference type="NCBIfam" id="NF003144">
    <property type="entry name" value="PRK04069.1"/>
    <property type="match status" value="1"/>
</dbReference>
<dbReference type="NCBIfam" id="TIGR01924">
    <property type="entry name" value="rsbW_low_gc"/>
    <property type="match status" value="1"/>
</dbReference>
<dbReference type="PANTHER" id="PTHR35526">
    <property type="entry name" value="ANTI-SIGMA-F FACTOR RSBW-RELATED"/>
    <property type="match status" value="1"/>
</dbReference>
<dbReference type="PANTHER" id="PTHR35526:SF9">
    <property type="entry name" value="SERINE-PROTEIN KINASE RSBW"/>
    <property type="match status" value="1"/>
</dbReference>
<dbReference type="Pfam" id="PF13581">
    <property type="entry name" value="HATPase_c_2"/>
    <property type="match status" value="1"/>
</dbReference>
<dbReference type="SMART" id="SM00387">
    <property type="entry name" value="HATPase_c"/>
    <property type="match status" value="1"/>
</dbReference>
<dbReference type="SUPFAM" id="SSF55874">
    <property type="entry name" value="ATPase domain of HSP90 chaperone/DNA topoisomerase II/histidine kinase"/>
    <property type="match status" value="1"/>
</dbReference>
<protein>
    <recommendedName>
        <fullName evidence="1">Serine-protein kinase RsbW</fullName>
        <ecNumber evidence="1">2.7.11.1</ecNumber>
    </recommendedName>
    <alternativeName>
        <fullName evidence="1">Anti-sigma-B factor</fullName>
    </alternativeName>
    <alternativeName>
        <fullName evidence="1">Sigma-B negative effector RsbW</fullName>
    </alternativeName>
</protein>
<keyword id="KW-0067">ATP-binding</keyword>
<keyword id="KW-0418">Kinase</keyword>
<keyword id="KW-0547">Nucleotide-binding</keyword>
<keyword id="KW-0723">Serine/threonine-protein kinase</keyword>
<keyword id="KW-0808">Transferase</keyword>
<name>RSBW_BACP2</name>
<sequence length="162" mass="18072">MNETVDLIEMKIPAKPEYVGIIRLTLSGVASRMGYVYEEIEDLKIAVSEACTNAVQHAYKGKDGEDGEVAVRFLVYEDRLEIIVADKGGSFDFKQKQEDLGPYTTAHTVDQLAEGGLGLYLMQTLMDEVEVQANSGVTVAMTKFLNRERVDHDTTIQNYETN</sequence>
<accession>A8FA73</accession>